<comment type="function">
    <text evidence="1">May play a role in transcription or may interact with other nuclear matrix proteins to form the internal fibrogranular network. In association with the SFPQ-NONO heteromer may play a role in nuclear retention of defective RNAs. Plays a role in the regulation of DNA virus-mediated innate immune response by assembling into the HDP-RNP complex, a complex that serves as a platform for IRF3 phosphorylation and subsequent innate immune response activation through the cGAS-STING pathway. Binds to N6-methyladenosine (m6A)-containing mRNAs and contributes to MYC stability by binding to m6A-containing MYC mRNAs. May bind to specific miRNA hairpins.</text>
</comment>
<comment type="subunit">
    <text evidence="1">Part of a complex consisting of SFPQ, NONO and MATR3. Interacts with AGO1 and AGO2 (By similarity). Part of a complex composed at least of ASH2L, EMSY, HCFC1, HSPA8, CCAR2, MATR3, MKI67, RBBP5, TUBB2A, WDR5 and ZNF335; this complex may have a histone H3-specific methyltransferase activity. Interacts with TARDBP. Part of the HDP-RNP complex composed of at least HEXIM1, PRKDC, XRCC5, XRCC6, paraspeckle proteins (SFPQ, NONO, PSPC1, RBM14, and MATR3) and NEAT1 RNA. Interacts with FUS. Interacts with IGF2BP1. Interacts with IGF2BP2 and IGF2BP3. Interacts with RBPMS (By similarity).</text>
</comment>
<comment type="subcellular location">
    <subcellularLocation>
        <location evidence="4">Nucleus matrix</location>
    </subcellularLocation>
</comment>
<accession>Q8K310</accession>
<proteinExistence type="evidence at protein level"/>
<feature type="initiator methionine" description="Removed" evidence="1">
    <location>
        <position position="1"/>
    </location>
</feature>
<feature type="chain" id="PRO_0000081623" description="Matrin-3">
    <location>
        <begin position="2"/>
        <end position="846"/>
    </location>
</feature>
<feature type="domain" description="RRM 1" evidence="5">
    <location>
        <begin position="398"/>
        <end position="473"/>
    </location>
</feature>
<feature type="domain" description="RRM 2" evidence="5">
    <location>
        <begin position="496"/>
        <end position="571"/>
    </location>
</feature>
<feature type="zinc finger region" description="Matrin-type" evidence="4">
    <location>
        <begin position="800"/>
        <end position="831"/>
    </location>
</feature>
<feature type="region of interest" description="Disordered" evidence="6">
    <location>
        <begin position="147"/>
        <end position="174"/>
    </location>
</feature>
<feature type="region of interest" description="Disordered" evidence="6">
    <location>
        <begin position="187"/>
        <end position="213"/>
    </location>
</feature>
<feature type="region of interest" description="Disordered" evidence="6">
    <location>
        <begin position="342"/>
        <end position="394"/>
    </location>
</feature>
<feature type="region of interest" description="Disordered" evidence="6">
    <location>
        <begin position="588"/>
        <end position="779"/>
    </location>
</feature>
<feature type="short sequence motif" description="Nuclear localization signal" evidence="3">
    <location>
        <begin position="709"/>
        <end position="717"/>
    </location>
</feature>
<feature type="compositionally biased region" description="Basic and acidic residues" evidence="6">
    <location>
        <begin position="160"/>
        <end position="174"/>
    </location>
</feature>
<feature type="compositionally biased region" description="Basic and acidic residues" evidence="6">
    <location>
        <begin position="201"/>
        <end position="213"/>
    </location>
</feature>
<feature type="compositionally biased region" description="Basic and acidic residues" evidence="6">
    <location>
        <begin position="600"/>
        <end position="642"/>
    </location>
</feature>
<feature type="compositionally biased region" description="Acidic residues" evidence="6">
    <location>
        <begin position="652"/>
        <end position="664"/>
    </location>
</feature>
<feature type="compositionally biased region" description="Low complexity" evidence="6">
    <location>
        <begin position="665"/>
        <end position="675"/>
    </location>
</feature>
<feature type="compositionally biased region" description="Basic and acidic residues" evidence="6">
    <location>
        <begin position="688"/>
        <end position="703"/>
    </location>
</feature>
<feature type="compositionally biased region" description="Basic and acidic residues" evidence="6">
    <location>
        <begin position="766"/>
        <end position="779"/>
    </location>
</feature>
<feature type="modified residue" description="N-acetylserine" evidence="1">
    <location>
        <position position="2"/>
    </location>
</feature>
<feature type="modified residue" description="N6-acetyllysine; alternate" evidence="1">
    <location>
        <position position="3"/>
    </location>
</feature>
<feature type="modified residue" description="Phosphoserine" evidence="1">
    <location>
        <position position="4"/>
    </location>
</feature>
<feature type="modified residue" description="Phosphoserine" evidence="1">
    <location>
        <position position="9"/>
    </location>
</feature>
<feature type="modified residue" description="Phosphoserine" evidence="1">
    <location>
        <position position="14"/>
    </location>
</feature>
<feature type="modified residue" description="Phosphoserine" evidence="1">
    <location>
        <position position="22"/>
    </location>
</feature>
<feature type="modified residue" description="Phosphoserine" evidence="1">
    <location>
        <position position="41"/>
    </location>
</feature>
<feature type="modified residue" description="Phosphoserine" evidence="1">
    <location>
        <position position="118"/>
    </location>
</feature>
<feature type="modified residue" description="Phosphoserine" evidence="1">
    <location>
        <position position="126"/>
    </location>
</feature>
<feature type="modified residue" description="Phosphothreonine" evidence="11">
    <location>
        <position position="150"/>
    </location>
</feature>
<feature type="modified residue" description="Phosphoserine" evidence="1">
    <location>
        <position position="157"/>
    </location>
</feature>
<feature type="modified residue" description="Phosphotyrosine" evidence="1">
    <location>
        <position position="158"/>
    </location>
</feature>
<feature type="modified residue" description="Phosphoserine" evidence="1">
    <location>
        <position position="164"/>
    </location>
</feature>
<feature type="modified residue" description="Phosphoserine" evidence="7 8 10 11">
    <location>
        <position position="188"/>
    </location>
</feature>
<feature type="modified residue" description="Phosphoserine" evidence="11">
    <location>
        <position position="195"/>
    </location>
</feature>
<feature type="modified residue" description="Phosphotyrosine" evidence="1">
    <location>
        <position position="202"/>
    </location>
</feature>
<feature type="modified residue" description="Phosphoserine" evidence="1">
    <location>
        <position position="206"/>
    </location>
</feature>
<feature type="modified residue" description="Phosphoserine" evidence="1">
    <location>
        <position position="208"/>
    </location>
</feature>
<feature type="modified residue" description="Phosphoserine" evidence="1">
    <location>
        <position position="211"/>
    </location>
</feature>
<feature type="modified residue" description="Phosphotyrosine" evidence="1">
    <location>
        <position position="219"/>
    </location>
</feature>
<feature type="modified residue" description="Phosphoserine" evidence="1">
    <location>
        <position position="234"/>
    </location>
</feature>
<feature type="modified residue" description="Phosphoserine" evidence="1">
    <location>
        <position position="264"/>
    </location>
</feature>
<feature type="modified residue" description="Phosphoserine" evidence="1">
    <location>
        <position position="275"/>
    </location>
</feature>
<feature type="modified residue" description="Phosphoserine" evidence="1">
    <location>
        <position position="509"/>
    </location>
</feature>
<feature type="modified residue" description="Phosphoserine" evidence="1">
    <location>
        <position position="511"/>
    </location>
</feature>
<feature type="modified residue" description="N6-acetyllysine; alternate" evidence="1">
    <location>
        <position position="522"/>
    </location>
</feature>
<feature type="modified residue" description="Phosphoserine" evidence="11">
    <location>
        <position position="533"/>
    </location>
</feature>
<feature type="modified residue" description="N6-acetyllysine" evidence="1">
    <location>
        <position position="571"/>
    </location>
</feature>
<feature type="modified residue" description="Phosphoserine" evidence="1">
    <location>
        <position position="596"/>
    </location>
</feature>
<feature type="modified residue" description="Phosphoserine" evidence="9 11">
    <location>
        <position position="598"/>
    </location>
</feature>
<feature type="modified residue" description="Phosphoserine" evidence="11">
    <location>
        <position position="604"/>
    </location>
</feature>
<feature type="modified residue" description="Phosphoserine" evidence="1">
    <location>
        <position position="606"/>
    </location>
</feature>
<feature type="modified residue" description="Phosphoserine" evidence="1">
    <location>
        <position position="653"/>
    </location>
</feature>
<feature type="modified residue" description="Phosphoserine" evidence="1">
    <location>
        <position position="670"/>
    </location>
</feature>
<feature type="modified residue" description="Phosphoserine" evidence="1">
    <location>
        <position position="672"/>
    </location>
</feature>
<feature type="modified residue" description="Phosphoserine" evidence="1">
    <location>
        <position position="673"/>
    </location>
</feature>
<feature type="modified residue" description="Phosphothreonine" evidence="1">
    <location>
        <position position="678"/>
    </location>
</feature>
<feature type="modified residue" description="Phosphoserine" evidence="1">
    <location>
        <position position="688"/>
    </location>
</feature>
<feature type="modified residue" description="Phosphothreonine" evidence="1">
    <location>
        <position position="740"/>
    </location>
</feature>
<feature type="modified residue" description="Phosphoserine" evidence="1">
    <location>
        <position position="746"/>
    </location>
</feature>
<feature type="modified residue" description="Phosphoserine" evidence="2">
    <location>
        <position position="758"/>
    </location>
</feature>
<feature type="modified residue" description="N6-acetyllysine; alternate" evidence="12">
    <location>
        <position position="835"/>
    </location>
</feature>
<feature type="cross-link" description="Glycyl lysine isopeptide (Lys-Gly) (interchain with G-Cter in SUMO2); alternate" evidence="1">
    <location>
        <position position="3"/>
    </location>
</feature>
<feature type="cross-link" description="Glycyl lysine isopeptide (Lys-Gly) (interchain with G-Cter in SUMO2)" evidence="1">
    <location>
        <position position="132"/>
    </location>
</feature>
<feature type="cross-link" description="Glycyl lysine isopeptide (Lys-Gly) (interchain with G-Cter in SUMO2)" evidence="1">
    <location>
        <position position="146"/>
    </location>
</feature>
<feature type="cross-link" description="Glycyl lysine isopeptide (Lys-Gly) (interchain with G-Cter in SUMO2)" evidence="1">
    <location>
        <position position="245"/>
    </location>
</feature>
<feature type="cross-link" description="Glycyl lysine isopeptide (Lys-Gly) (interchain with G-Cter in SUMO2)" evidence="1">
    <location>
        <position position="269"/>
    </location>
</feature>
<feature type="cross-link" description="Glycyl lysine isopeptide (Lys-Gly) (interchain with G-Cter in SUMO2)" evidence="1">
    <location>
        <position position="478"/>
    </location>
</feature>
<feature type="cross-link" description="Glycyl lysine isopeptide (Lys-Gly) (interchain with G-Cter in SUMO2)" evidence="1">
    <location>
        <position position="487"/>
    </location>
</feature>
<feature type="cross-link" description="Glycyl lysine isopeptide (Lys-Gly) (interchain with G-Cter in SUMO2)" evidence="1">
    <location>
        <position position="491"/>
    </location>
</feature>
<feature type="cross-link" description="Glycyl lysine isopeptide (Lys-Gly) (interchain with G-Cter in SUMO2)" evidence="1">
    <location>
        <position position="515"/>
    </location>
</feature>
<feature type="cross-link" description="Glycyl lysine isopeptide (Lys-Gly) (interchain with G-Cter in SUMO2); alternate" evidence="1">
    <location>
        <position position="522"/>
    </location>
</feature>
<feature type="cross-link" description="Glycyl lysine isopeptide (Lys-Gly) (interchain with G-Cter in SUMO2)" evidence="1">
    <location>
        <position position="554"/>
    </location>
</feature>
<feature type="cross-link" description="Glycyl lysine isopeptide (Lys-Gly) (interchain with G-Cter in SUMO2)" evidence="1">
    <location>
        <position position="555"/>
    </location>
</feature>
<feature type="cross-link" description="Glycyl lysine isopeptide (Lys-Gly) (interchain with G-Cter in SUMO2)" evidence="1">
    <location>
        <position position="616"/>
    </location>
</feature>
<feature type="cross-link" description="Glycyl lysine isopeptide (Lys-Gly) (interchain with G-Cter in SUMO2)" evidence="1">
    <location>
        <position position="629"/>
    </location>
</feature>
<feature type="cross-link" description="Glycyl lysine isopeptide (Lys-Gly) (interchain with G-Cter in SUMO2)" evidence="1">
    <location>
        <position position="718"/>
    </location>
</feature>
<feature type="cross-link" description="Glycyl lysine isopeptide (Lys-Gly) (interchain with G-Cter in SUMO2)" evidence="1">
    <location>
        <position position="735"/>
    </location>
</feature>
<feature type="cross-link" description="Glycyl lysine isopeptide (Lys-Gly) (interchain with G-Cter in SUMO2)" evidence="1">
    <location>
        <position position="769"/>
    </location>
</feature>
<feature type="cross-link" description="Glycyl lysine isopeptide (Lys-Gly) (interchain with G-Cter in SUMO2); alternate" evidence="1">
    <location>
        <position position="835"/>
    </location>
</feature>
<feature type="strand" evidence="13">
    <location>
        <begin position="399"/>
        <end position="404"/>
    </location>
</feature>
<feature type="strand" evidence="13">
    <location>
        <begin position="408"/>
        <end position="410"/>
    </location>
</feature>
<feature type="helix" evidence="13">
    <location>
        <begin position="411"/>
        <end position="416"/>
    </location>
</feature>
<feature type="turn" evidence="13">
    <location>
        <begin position="417"/>
        <end position="419"/>
    </location>
</feature>
<feature type="helix" evidence="13">
    <location>
        <begin position="420"/>
        <end position="422"/>
    </location>
</feature>
<feature type="strand" evidence="13">
    <location>
        <begin position="425"/>
        <end position="430"/>
    </location>
</feature>
<feature type="strand" evidence="13">
    <location>
        <begin position="432"/>
        <end position="435"/>
    </location>
</feature>
<feature type="strand" evidence="13">
    <location>
        <begin position="437"/>
        <end position="443"/>
    </location>
</feature>
<feature type="helix" evidence="13">
    <location>
        <begin position="444"/>
        <end position="456"/>
    </location>
</feature>
<feature type="strand" evidence="15">
    <location>
        <begin position="459"/>
        <end position="461"/>
    </location>
</feature>
<feature type="strand" evidence="13">
    <location>
        <begin position="467"/>
        <end position="471"/>
    </location>
</feature>
<feature type="strand" evidence="14">
    <location>
        <begin position="497"/>
        <end position="502"/>
    </location>
</feature>
<feature type="helix" evidence="14">
    <location>
        <begin position="511"/>
        <end position="514"/>
    </location>
</feature>
<feature type="turn" evidence="14">
    <location>
        <begin position="515"/>
        <end position="520"/>
    </location>
</feature>
<feature type="strand" evidence="14">
    <location>
        <begin position="524"/>
        <end position="529"/>
    </location>
</feature>
<feature type="turn" evidence="14">
    <location>
        <begin position="530"/>
        <end position="533"/>
    </location>
</feature>
<feature type="strand" evidence="14">
    <location>
        <begin position="534"/>
        <end position="538"/>
    </location>
</feature>
<feature type="helix" evidence="14">
    <location>
        <begin position="542"/>
        <end position="554"/>
    </location>
</feature>
<feature type="strand" evidence="14">
    <location>
        <begin position="559"/>
        <end position="562"/>
    </location>
</feature>
<feature type="strand" evidence="14">
    <location>
        <begin position="565"/>
        <end position="569"/>
    </location>
</feature>
<feature type="strand" evidence="14">
    <location>
        <begin position="573"/>
        <end position="576"/>
    </location>
</feature>
<organism>
    <name type="scientific">Mus musculus</name>
    <name type="common">Mouse</name>
    <dbReference type="NCBI Taxonomy" id="10090"/>
    <lineage>
        <taxon>Eukaryota</taxon>
        <taxon>Metazoa</taxon>
        <taxon>Chordata</taxon>
        <taxon>Craniata</taxon>
        <taxon>Vertebrata</taxon>
        <taxon>Euteleostomi</taxon>
        <taxon>Mammalia</taxon>
        <taxon>Eutheria</taxon>
        <taxon>Euarchontoglires</taxon>
        <taxon>Glires</taxon>
        <taxon>Rodentia</taxon>
        <taxon>Myomorpha</taxon>
        <taxon>Muroidea</taxon>
        <taxon>Muridae</taxon>
        <taxon>Murinae</taxon>
        <taxon>Mus</taxon>
        <taxon>Mus</taxon>
    </lineage>
</organism>
<keyword id="KW-0002">3D-structure</keyword>
<keyword id="KW-0007">Acetylation</keyword>
<keyword id="KW-0903">Direct protein sequencing</keyword>
<keyword id="KW-0391">Immunity</keyword>
<keyword id="KW-0399">Innate immunity</keyword>
<keyword id="KW-1017">Isopeptide bond</keyword>
<keyword id="KW-0479">Metal-binding</keyword>
<keyword id="KW-0539">Nucleus</keyword>
<keyword id="KW-0597">Phosphoprotein</keyword>
<keyword id="KW-1185">Reference proteome</keyword>
<keyword id="KW-0677">Repeat</keyword>
<keyword id="KW-0694">RNA-binding</keyword>
<keyword id="KW-0832">Ubl conjugation</keyword>
<keyword id="KW-0862">Zinc</keyword>
<keyword id="KW-0863">Zinc-finger</keyword>
<gene>
    <name type="primary">Matr3</name>
</gene>
<name>MATR3_MOUSE</name>
<protein>
    <recommendedName>
        <fullName>Matrin-3</fullName>
    </recommendedName>
</protein>
<evidence type="ECO:0000250" key="1">
    <source>
        <dbReference type="UniProtKB" id="P43243"/>
    </source>
</evidence>
<evidence type="ECO:0000250" key="2">
    <source>
        <dbReference type="UniProtKB" id="P43244"/>
    </source>
</evidence>
<evidence type="ECO:0000255" key="3"/>
<evidence type="ECO:0000255" key="4">
    <source>
        <dbReference type="PROSITE-ProRule" id="PRU00130"/>
    </source>
</evidence>
<evidence type="ECO:0000255" key="5">
    <source>
        <dbReference type="PROSITE-ProRule" id="PRU00176"/>
    </source>
</evidence>
<evidence type="ECO:0000256" key="6">
    <source>
        <dbReference type="SAM" id="MobiDB-lite"/>
    </source>
</evidence>
<evidence type="ECO:0007744" key="7">
    <source>
    </source>
</evidence>
<evidence type="ECO:0007744" key="8">
    <source>
    </source>
</evidence>
<evidence type="ECO:0007744" key="9">
    <source>
    </source>
</evidence>
<evidence type="ECO:0007744" key="10">
    <source>
    </source>
</evidence>
<evidence type="ECO:0007744" key="11">
    <source>
    </source>
</evidence>
<evidence type="ECO:0007744" key="12">
    <source>
    </source>
</evidence>
<evidence type="ECO:0007829" key="13">
    <source>
        <dbReference type="PDB" id="1X4D"/>
    </source>
</evidence>
<evidence type="ECO:0007829" key="14">
    <source>
        <dbReference type="PDB" id="1X4F"/>
    </source>
</evidence>
<evidence type="ECO:0007829" key="15">
    <source>
        <dbReference type="PDB" id="7FBR"/>
    </source>
</evidence>
<dbReference type="EMBL" id="AK087939">
    <property type="protein sequence ID" value="BAC40050.1"/>
    <property type="molecule type" value="mRNA"/>
</dbReference>
<dbReference type="EMBL" id="BC029070">
    <property type="protein sequence ID" value="AAH29070.1"/>
    <property type="molecule type" value="mRNA"/>
</dbReference>
<dbReference type="CCDS" id="CCDS29142.1"/>
<dbReference type="RefSeq" id="NP_001386912.1">
    <property type="nucleotide sequence ID" value="NM_001399983.1"/>
</dbReference>
<dbReference type="RefSeq" id="NP_001386913.1">
    <property type="nucleotide sequence ID" value="NM_001399984.1"/>
</dbReference>
<dbReference type="RefSeq" id="NP_001386914.1">
    <property type="nucleotide sequence ID" value="NM_001399985.1"/>
</dbReference>
<dbReference type="RefSeq" id="NP_001386915.1">
    <property type="nucleotide sequence ID" value="NM_001399986.1"/>
</dbReference>
<dbReference type="RefSeq" id="NP_001401429.1">
    <property type="nucleotide sequence ID" value="NM_001414500.1"/>
</dbReference>
<dbReference type="RefSeq" id="NP_001401430.1">
    <property type="nucleotide sequence ID" value="NM_001414501.1"/>
</dbReference>
<dbReference type="RefSeq" id="NP_034901.2">
    <property type="nucleotide sequence ID" value="NM_010771.6"/>
</dbReference>
<dbReference type="PDB" id="1X4D">
    <property type="method" value="NMR"/>
    <property type="chains" value="A=390-478"/>
</dbReference>
<dbReference type="PDB" id="1X4F">
    <property type="method" value="NMR"/>
    <property type="chains" value="A=478-576"/>
</dbReference>
<dbReference type="PDB" id="7FBR">
    <property type="method" value="NMR"/>
    <property type="chains" value="A=390-478"/>
</dbReference>
<dbReference type="PDB" id="7FBV">
    <property type="method" value="NMR"/>
    <property type="chains" value="A=478-576"/>
</dbReference>
<dbReference type="PDBsum" id="1X4D"/>
<dbReference type="PDBsum" id="1X4F"/>
<dbReference type="PDBsum" id="7FBR"/>
<dbReference type="PDBsum" id="7FBV"/>
<dbReference type="SMR" id="Q8K310"/>
<dbReference type="BioGRID" id="201324">
    <property type="interactions" value="41"/>
</dbReference>
<dbReference type="FunCoup" id="Q8K310">
    <property type="interactions" value="4351"/>
</dbReference>
<dbReference type="IntAct" id="Q8K310">
    <property type="interactions" value="23"/>
</dbReference>
<dbReference type="MINT" id="Q8K310"/>
<dbReference type="STRING" id="10090.ENSMUSP00000125761"/>
<dbReference type="GlyGen" id="Q8K310">
    <property type="glycosylation" value="3 sites, 1 O-linked glycan (3 sites)"/>
</dbReference>
<dbReference type="iPTMnet" id="Q8K310"/>
<dbReference type="PhosphoSitePlus" id="Q8K310"/>
<dbReference type="SwissPalm" id="Q8K310"/>
<dbReference type="jPOST" id="Q8K310"/>
<dbReference type="PaxDb" id="10090-ENSMUSP00000125761"/>
<dbReference type="ProteomicsDB" id="292271"/>
<dbReference type="Pumba" id="Q8K310"/>
<dbReference type="DNASU" id="17184"/>
<dbReference type="Ensembl" id="ENSMUST00000166793.10">
    <property type="protein sequence ID" value="ENSMUSP00000125761.2"/>
    <property type="gene ID" value="ENSMUSG00000037236.17"/>
</dbReference>
<dbReference type="Ensembl" id="ENSMUST00000235199.2">
    <property type="protein sequence ID" value="ENSMUSP00000158074.2"/>
    <property type="gene ID" value="ENSMUSG00000037236.17"/>
</dbReference>
<dbReference type="Ensembl" id="ENSMUST00000237744.2">
    <property type="protein sequence ID" value="ENSMUSP00000158537.2"/>
    <property type="gene ID" value="ENSMUSG00000037236.17"/>
</dbReference>
<dbReference type="GeneID" id="17184"/>
<dbReference type="KEGG" id="mmu:17184"/>
<dbReference type="UCSC" id="uc008emg.2">
    <property type="organism name" value="mouse"/>
</dbReference>
<dbReference type="AGR" id="MGI:1298379"/>
<dbReference type="CTD" id="9782"/>
<dbReference type="MGI" id="MGI:1298379">
    <property type="gene designation" value="Matr3"/>
</dbReference>
<dbReference type="VEuPathDB" id="HostDB:ENSMUSG00000037236"/>
<dbReference type="eggNOG" id="ENOG502QRVG">
    <property type="taxonomic scope" value="Eukaryota"/>
</dbReference>
<dbReference type="GeneTree" id="ENSGT00940000153322"/>
<dbReference type="HOGENOM" id="CLU_015917_0_0_1"/>
<dbReference type="InParanoid" id="Q8K310"/>
<dbReference type="OMA" id="CKGFVEL"/>
<dbReference type="OrthoDB" id="9938441at2759"/>
<dbReference type="PhylomeDB" id="Q8K310"/>
<dbReference type="TreeFam" id="TF333921"/>
<dbReference type="BioGRID-ORCS" id="17184">
    <property type="hits" value="12 hits in 80 CRISPR screens"/>
</dbReference>
<dbReference type="CD-CODE" id="D12E4DB9">
    <property type="entry name" value="Stress granule"/>
</dbReference>
<dbReference type="ChiTaRS" id="Matr3">
    <property type="organism name" value="mouse"/>
</dbReference>
<dbReference type="EvolutionaryTrace" id="Q8K310"/>
<dbReference type="PRO" id="PR:Q8K310"/>
<dbReference type="Proteomes" id="UP000000589">
    <property type="component" value="Chromosome 18"/>
</dbReference>
<dbReference type="RNAct" id="Q8K310">
    <property type="molecule type" value="protein"/>
</dbReference>
<dbReference type="Bgee" id="ENSMUSG00000037236">
    <property type="expression patterns" value="Expressed in renal medulla interstitium and 255 other cell types or tissues"/>
</dbReference>
<dbReference type="ExpressionAtlas" id="Q8K310">
    <property type="expression patterns" value="baseline and differential"/>
</dbReference>
<dbReference type="GO" id="GO:0016363">
    <property type="term" value="C:nuclear matrix"/>
    <property type="evidence" value="ECO:0007669"/>
    <property type="project" value="UniProtKB-SubCell"/>
</dbReference>
<dbReference type="GO" id="GO:0005634">
    <property type="term" value="C:nucleus"/>
    <property type="evidence" value="ECO:0000314"/>
    <property type="project" value="MGI"/>
</dbReference>
<dbReference type="GO" id="GO:0042802">
    <property type="term" value="F:identical protein binding"/>
    <property type="evidence" value="ECO:0007669"/>
    <property type="project" value="Ensembl"/>
</dbReference>
<dbReference type="GO" id="GO:0035198">
    <property type="term" value="F:miRNA binding"/>
    <property type="evidence" value="ECO:0000250"/>
    <property type="project" value="UniProtKB"/>
</dbReference>
<dbReference type="GO" id="GO:0008270">
    <property type="term" value="F:zinc ion binding"/>
    <property type="evidence" value="ECO:0007669"/>
    <property type="project" value="UniProtKB-KW"/>
</dbReference>
<dbReference type="GO" id="GO:0002218">
    <property type="term" value="P:activation of innate immune response"/>
    <property type="evidence" value="ECO:0007669"/>
    <property type="project" value="Ensembl"/>
</dbReference>
<dbReference type="GO" id="GO:0001825">
    <property type="term" value="P:blastocyst formation"/>
    <property type="evidence" value="ECO:0000315"/>
    <property type="project" value="MGI"/>
</dbReference>
<dbReference type="GO" id="GO:0003170">
    <property type="term" value="P:heart valve development"/>
    <property type="evidence" value="ECO:0000315"/>
    <property type="project" value="MGI"/>
</dbReference>
<dbReference type="GO" id="GO:0045087">
    <property type="term" value="P:innate immune response"/>
    <property type="evidence" value="ECO:0007669"/>
    <property type="project" value="UniProtKB-KW"/>
</dbReference>
<dbReference type="GO" id="GO:0010608">
    <property type="term" value="P:post-transcriptional regulation of gene expression"/>
    <property type="evidence" value="ECO:0007669"/>
    <property type="project" value="Ensembl"/>
</dbReference>
<dbReference type="GO" id="GO:0003281">
    <property type="term" value="P:ventricular septum development"/>
    <property type="evidence" value="ECO:0000315"/>
    <property type="project" value="MGI"/>
</dbReference>
<dbReference type="CDD" id="cd12714">
    <property type="entry name" value="RRM1_MATR3"/>
    <property type="match status" value="1"/>
</dbReference>
<dbReference type="CDD" id="cd12715">
    <property type="entry name" value="RRM2_MATR3"/>
    <property type="match status" value="1"/>
</dbReference>
<dbReference type="FunFam" id="3.30.70.330:FF:000151">
    <property type="entry name" value="matrin-3 isoform X1"/>
    <property type="match status" value="1"/>
</dbReference>
<dbReference type="FunFam" id="3.30.70.330:FF:000149">
    <property type="entry name" value="matrin-3 isoform X2"/>
    <property type="match status" value="1"/>
</dbReference>
<dbReference type="Gene3D" id="3.30.70.330">
    <property type="match status" value="2"/>
</dbReference>
<dbReference type="InterPro" id="IPR034928">
    <property type="entry name" value="MATR3_RRM1"/>
</dbReference>
<dbReference type="InterPro" id="IPR034930">
    <property type="entry name" value="MATR3_RRM2"/>
</dbReference>
<dbReference type="InterPro" id="IPR000690">
    <property type="entry name" value="Matrin/U1-C_Znf_C2H2"/>
</dbReference>
<dbReference type="InterPro" id="IPR003604">
    <property type="entry name" value="Matrin/U1-like-C_Znf_C2H2"/>
</dbReference>
<dbReference type="InterPro" id="IPR012677">
    <property type="entry name" value="Nucleotide-bd_a/b_plait_sf"/>
</dbReference>
<dbReference type="InterPro" id="IPR035979">
    <property type="entry name" value="RBD_domain_sf"/>
</dbReference>
<dbReference type="InterPro" id="IPR000504">
    <property type="entry name" value="RRM_dom"/>
</dbReference>
<dbReference type="PANTHER" id="PTHR15592">
    <property type="entry name" value="MATRIN 3/NUCLEAR PROTEIN 220-RELATED"/>
    <property type="match status" value="1"/>
</dbReference>
<dbReference type="SMART" id="SM00360">
    <property type="entry name" value="RRM"/>
    <property type="match status" value="2"/>
</dbReference>
<dbReference type="SMART" id="SM00451">
    <property type="entry name" value="ZnF_U1"/>
    <property type="match status" value="2"/>
</dbReference>
<dbReference type="SUPFAM" id="SSF54928">
    <property type="entry name" value="RNA-binding domain, RBD"/>
    <property type="match status" value="2"/>
</dbReference>
<dbReference type="PROSITE" id="PS50102">
    <property type="entry name" value="RRM"/>
    <property type="match status" value="2"/>
</dbReference>
<dbReference type="PROSITE" id="PS50171">
    <property type="entry name" value="ZF_MATRIN"/>
    <property type="match status" value="1"/>
</dbReference>
<reference key="1">
    <citation type="journal article" date="2005" name="Science">
        <title>The transcriptional landscape of the mammalian genome.</title>
        <authorList>
            <person name="Carninci P."/>
            <person name="Kasukawa T."/>
            <person name="Katayama S."/>
            <person name="Gough J."/>
            <person name="Frith M.C."/>
            <person name="Maeda N."/>
            <person name="Oyama R."/>
            <person name="Ravasi T."/>
            <person name="Lenhard B."/>
            <person name="Wells C."/>
            <person name="Kodzius R."/>
            <person name="Shimokawa K."/>
            <person name="Bajic V.B."/>
            <person name="Brenner S.E."/>
            <person name="Batalov S."/>
            <person name="Forrest A.R."/>
            <person name="Zavolan M."/>
            <person name="Davis M.J."/>
            <person name="Wilming L.G."/>
            <person name="Aidinis V."/>
            <person name="Allen J.E."/>
            <person name="Ambesi-Impiombato A."/>
            <person name="Apweiler R."/>
            <person name="Aturaliya R.N."/>
            <person name="Bailey T.L."/>
            <person name="Bansal M."/>
            <person name="Baxter L."/>
            <person name="Beisel K.W."/>
            <person name="Bersano T."/>
            <person name="Bono H."/>
            <person name="Chalk A.M."/>
            <person name="Chiu K.P."/>
            <person name="Choudhary V."/>
            <person name="Christoffels A."/>
            <person name="Clutterbuck D.R."/>
            <person name="Crowe M.L."/>
            <person name="Dalla E."/>
            <person name="Dalrymple B.P."/>
            <person name="de Bono B."/>
            <person name="Della Gatta G."/>
            <person name="di Bernardo D."/>
            <person name="Down T."/>
            <person name="Engstrom P."/>
            <person name="Fagiolini M."/>
            <person name="Faulkner G."/>
            <person name="Fletcher C.F."/>
            <person name="Fukushima T."/>
            <person name="Furuno M."/>
            <person name="Futaki S."/>
            <person name="Gariboldi M."/>
            <person name="Georgii-Hemming P."/>
            <person name="Gingeras T.R."/>
            <person name="Gojobori T."/>
            <person name="Green R.E."/>
            <person name="Gustincich S."/>
            <person name="Harbers M."/>
            <person name="Hayashi Y."/>
            <person name="Hensch T.K."/>
            <person name="Hirokawa N."/>
            <person name="Hill D."/>
            <person name="Huminiecki L."/>
            <person name="Iacono M."/>
            <person name="Ikeo K."/>
            <person name="Iwama A."/>
            <person name="Ishikawa T."/>
            <person name="Jakt M."/>
            <person name="Kanapin A."/>
            <person name="Katoh M."/>
            <person name="Kawasawa Y."/>
            <person name="Kelso J."/>
            <person name="Kitamura H."/>
            <person name="Kitano H."/>
            <person name="Kollias G."/>
            <person name="Krishnan S.P."/>
            <person name="Kruger A."/>
            <person name="Kummerfeld S.K."/>
            <person name="Kurochkin I.V."/>
            <person name="Lareau L.F."/>
            <person name="Lazarevic D."/>
            <person name="Lipovich L."/>
            <person name="Liu J."/>
            <person name="Liuni S."/>
            <person name="McWilliam S."/>
            <person name="Madan Babu M."/>
            <person name="Madera M."/>
            <person name="Marchionni L."/>
            <person name="Matsuda H."/>
            <person name="Matsuzawa S."/>
            <person name="Miki H."/>
            <person name="Mignone F."/>
            <person name="Miyake S."/>
            <person name="Morris K."/>
            <person name="Mottagui-Tabar S."/>
            <person name="Mulder N."/>
            <person name="Nakano N."/>
            <person name="Nakauchi H."/>
            <person name="Ng P."/>
            <person name="Nilsson R."/>
            <person name="Nishiguchi S."/>
            <person name="Nishikawa S."/>
            <person name="Nori F."/>
            <person name="Ohara O."/>
            <person name="Okazaki Y."/>
            <person name="Orlando V."/>
            <person name="Pang K.C."/>
            <person name="Pavan W.J."/>
            <person name="Pavesi G."/>
            <person name="Pesole G."/>
            <person name="Petrovsky N."/>
            <person name="Piazza S."/>
            <person name="Reed J."/>
            <person name="Reid J.F."/>
            <person name="Ring B.Z."/>
            <person name="Ringwald M."/>
            <person name="Rost B."/>
            <person name="Ruan Y."/>
            <person name="Salzberg S.L."/>
            <person name="Sandelin A."/>
            <person name="Schneider C."/>
            <person name="Schoenbach C."/>
            <person name="Sekiguchi K."/>
            <person name="Semple C.A."/>
            <person name="Seno S."/>
            <person name="Sessa L."/>
            <person name="Sheng Y."/>
            <person name="Shibata Y."/>
            <person name="Shimada H."/>
            <person name="Shimada K."/>
            <person name="Silva D."/>
            <person name="Sinclair B."/>
            <person name="Sperling S."/>
            <person name="Stupka E."/>
            <person name="Sugiura K."/>
            <person name="Sultana R."/>
            <person name="Takenaka Y."/>
            <person name="Taki K."/>
            <person name="Tammoja K."/>
            <person name="Tan S.L."/>
            <person name="Tang S."/>
            <person name="Taylor M.S."/>
            <person name="Tegner J."/>
            <person name="Teichmann S.A."/>
            <person name="Ueda H.R."/>
            <person name="van Nimwegen E."/>
            <person name="Verardo R."/>
            <person name="Wei C.L."/>
            <person name="Yagi K."/>
            <person name="Yamanishi H."/>
            <person name="Zabarovsky E."/>
            <person name="Zhu S."/>
            <person name="Zimmer A."/>
            <person name="Hide W."/>
            <person name="Bult C."/>
            <person name="Grimmond S.M."/>
            <person name="Teasdale R.D."/>
            <person name="Liu E.T."/>
            <person name="Brusic V."/>
            <person name="Quackenbush J."/>
            <person name="Wahlestedt C."/>
            <person name="Mattick J.S."/>
            <person name="Hume D.A."/>
            <person name="Kai C."/>
            <person name="Sasaki D."/>
            <person name="Tomaru Y."/>
            <person name="Fukuda S."/>
            <person name="Kanamori-Katayama M."/>
            <person name="Suzuki M."/>
            <person name="Aoki J."/>
            <person name="Arakawa T."/>
            <person name="Iida J."/>
            <person name="Imamura K."/>
            <person name="Itoh M."/>
            <person name="Kato T."/>
            <person name="Kawaji H."/>
            <person name="Kawagashira N."/>
            <person name="Kawashima T."/>
            <person name="Kojima M."/>
            <person name="Kondo S."/>
            <person name="Konno H."/>
            <person name="Nakano K."/>
            <person name="Ninomiya N."/>
            <person name="Nishio T."/>
            <person name="Okada M."/>
            <person name="Plessy C."/>
            <person name="Shibata K."/>
            <person name="Shiraki T."/>
            <person name="Suzuki S."/>
            <person name="Tagami M."/>
            <person name="Waki K."/>
            <person name="Watahiki A."/>
            <person name="Okamura-Oho Y."/>
            <person name="Suzuki H."/>
            <person name="Kawai J."/>
            <person name="Hayashizaki Y."/>
        </authorList>
    </citation>
    <scope>NUCLEOTIDE SEQUENCE [LARGE SCALE MRNA]</scope>
    <source>
        <strain>NOD</strain>
        <tissue>Thymus</tissue>
    </source>
</reference>
<reference key="2">
    <citation type="journal article" date="2004" name="Genome Res.">
        <title>The status, quality, and expansion of the NIH full-length cDNA project: the Mammalian Gene Collection (MGC).</title>
        <authorList>
            <consortium name="The MGC Project Team"/>
        </authorList>
    </citation>
    <scope>NUCLEOTIDE SEQUENCE [LARGE SCALE MRNA]</scope>
    <source>
        <strain>Czech II</strain>
        <tissue>Mammary tumor</tissue>
    </source>
</reference>
<reference key="3">
    <citation type="submission" date="2009-01" db="UniProtKB">
        <authorList>
            <person name="Lubec G."/>
            <person name="Sunyer B."/>
            <person name="Chen W.-Q."/>
        </authorList>
    </citation>
    <scope>PROTEIN SEQUENCE OF 4-12; 20-44; 93-127; 133-146; 193-223; 230-245; 271-304; 399-407; 413-433; 497-515; 525-530; 533-542; 556-562; 719-735; 780-797 AND 804-816</scope>
    <scope>IDENTIFICATION BY MASS SPECTROMETRY</scope>
    <source>
        <strain>OF1</strain>
        <tissue>Hippocampus</tissue>
    </source>
</reference>
<reference key="4">
    <citation type="journal article" date="2006" name="Mol. Cell. Proteomics">
        <title>Comprehensive identification of phosphorylation sites in postsynaptic density preparations.</title>
        <authorList>
            <person name="Trinidad J.C."/>
            <person name="Specht C.G."/>
            <person name="Thalhammer A."/>
            <person name="Schoepfer R."/>
            <person name="Burlingame A.L."/>
        </authorList>
    </citation>
    <scope>PHOSPHORYLATION [LARGE SCALE ANALYSIS] AT SER-188</scope>
    <scope>IDENTIFICATION BY MASS SPECTROMETRY [LARGE SCALE ANALYSIS]</scope>
    <source>
        <tissue>Brain</tissue>
    </source>
</reference>
<reference key="5">
    <citation type="journal article" date="2007" name="Proc. Natl. Acad. Sci. U.S.A.">
        <title>Large-scale phosphorylation analysis of mouse liver.</title>
        <authorList>
            <person name="Villen J."/>
            <person name="Beausoleil S.A."/>
            <person name="Gerber S.A."/>
            <person name="Gygi S.P."/>
        </authorList>
    </citation>
    <scope>PHOSPHORYLATION [LARGE SCALE ANALYSIS] AT SER-188</scope>
    <scope>IDENTIFICATION BY MASS SPECTROMETRY [LARGE SCALE ANALYSIS]</scope>
    <source>
        <tissue>Liver</tissue>
    </source>
</reference>
<reference key="6">
    <citation type="journal article" date="2009" name="Immunity">
        <title>The phagosomal proteome in interferon-gamma-activated macrophages.</title>
        <authorList>
            <person name="Trost M."/>
            <person name="English L."/>
            <person name="Lemieux S."/>
            <person name="Courcelles M."/>
            <person name="Desjardins M."/>
            <person name="Thibault P."/>
        </authorList>
    </citation>
    <scope>PHOSPHORYLATION [LARGE SCALE ANALYSIS] AT SER-188</scope>
    <scope>IDENTIFICATION BY MASS SPECTROMETRY [LARGE SCALE ANALYSIS]</scope>
</reference>
<reference key="7">
    <citation type="journal article" date="2009" name="Mol. Cell. Proteomics">
        <title>Large scale localization of protein phosphorylation by use of electron capture dissociation mass spectrometry.</title>
        <authorList>
            <person name="Sweet S.M."/>
            <person name="Bailey C.M."/>
            <person name="Cunningham D.L."/>
            <person name="Heath J.K."/>
            <person name="Cooper H.J."/>
        </authorList>
    </citation>
    <scope>PHOSPHORYLATION [LARGE SCALE ANALYSIS] AT SER-598</scope>
    <scope>IDENTIFICATION BY MASS SPECTROMETRY [LARGE SCALE ANALYSIS]</scope>
    <source>
        <tissue>Embryonic fibroblast</tissue>
    </source>
</reference>
<reference key="8">
    <citation type="journal article" date="2010" name="Cell">
        <title>A tissue-specific atlas of mouse protein phosphorylation and expression.</title>
        <authorList>
            <person name="Huttlin E.L."/>
            <person name="Jedrychowski M.P."/>
            <person name="Elias J.E."/>
            <person name="Goswami T."/>
            <person name="Rad R."/>
            <person name="Beausoleil S.A."/>
            <person name="Villen J."/>
            <person name="Haas W."/>
            <person name="Sowa M.E."/>
            <person name="Gygi S.P."/>
        </authorList>
    </citation>
    <scope>PHOSPHORYLATION [LARGE SCALE ANALYSIS] AT THR-150; SER-188; SER-195; SER-533; SER-598 AND SER-604</scope>
    <scope>IDENTIFICATION BY MASS SPECTROMETRY [LARGE SCALE ANALYSIS]</scope>
    <source>
        <tissue>Brain</tissue>
        <tissue>Brown adipose tissue</tissue>
        <tissue>Heart</tissue>
        <tissue>Kidney</tissue>
        <tissue>Lung</tissue>
        <tissue>Pancreas</tissue>
        <tissue>Spleen</tissue>
        <tissue>Testis</tissue>
    </source>
</reference>
<reference key="9">
    <citation type="journal article" date="2013" name="Mol. Cell">
        <title>SIRT5-mediated lysine desuccinylation impacts diverse metabolic pathways.</title>
        <authorList>
            <person name="Park J."/>
            <person name="Chen Y."/>
            <person name="Tishkoff D.X."/>
            <person name="Peng C."/>
            <person name="Tan M."/>
            <person name="Dai L."/>
            <person name="Xie Z."/>
            <person name="Zhang Y."/>
            <person name="Zwaans B.M."/>
            <person name="Skinner M.E."/>
            <person name="Lombard D.B."/>
            <person name="Zhao Y."/>
        </authorList>
    </citation>
    <scope>ACETYLATION [LARGE SCALE ANALYSIS] AT LYS-835</scope>
    <scope>IDENTIFICATION BY MASS SPECTROMETRY [LARGE SCALE ANALYSIS]</scope>
    <source>
        <tissue>Embryonic fibroblast</tissue>
    </source>
</reference>
<reference key="10">
    <citation type="submission" date="2005-11" db="PDB data bank">
        <title>Solution structure of RRM domains in matrin 3.</title>
        <authorList>
            <consortium name="RIKEN structural genomics initiative (RSGI)"/>
        </authorList>
    </citation>
    <scope>STRUCTURE BY NMR OF 390-576</scope>
</reference>
<sequence length="846" mass="94630">MSKSFQQSSLGRDSQGHGRDLSAAGIGLLAAATQSLSMPASLGRMNQGTARLASLMNLGMSSSLNQQGAHSALSSASTSSHNLQSIFNIGSRGPLPLSSQHRGDTDQASNILASFGLSARDLDELSRYPEDKITPENLPQILLQLKRRRTEEGPTLSYGRDGRSATREPPYRVPRDDWEEKRHFRRDSFDDRGPSLNPVLDYDHGSRSQESGYYDRMDYEDDRLRDGERCRDDSFFGETSHNYHKFDSEYERMGRGPGPLQERSLFEKKRGAPPSSNIEDFHGLLPKGYPHLCSICDLPVHSNKEWSQHINGASHSRRCQLLLEIYPEWNPDNDTGHTMGDPFMLQQSTNPAPGILGPPPPSFHLGGPAVGPRGNLGAGNGNLQGPRHMQKGRVETSRVVHIMDFQRGKNLRYQLLQLVEPFGVISNHLILNKINEAFIEMATTEDAQAAVDYYTTTPALVFGKPVRVHLSQKYKRIKKPEGKPDQKFDQKQELGRVIHLSNLPHSGYSDSAVLKLAEPYGKIKNYILMRMKSQAFIEMETREDAMAMVDHCLKKALWFQGRCVKVDLSEKYKKLVLRIPNRGIDLLKKDKSRKRSYSPDGKESPSDKKSKTDAQKTESPAEGKEQEEKSGEDGEKDTKDDQTEQEPSMLLESEDELLVDEEEAAALLESGSSVGDETDLANLGDVSSDGKKEPSDKAVKKDPSASATSKKKLKKVDKIEELDQENEAALENGIKNEENTEPGAESAENADDPNKDTSENADGQNDENKEDYTIPDEYRIGPYQPNVPVGIDYVIPKTGFYCKLCSLFYTNEEVAKNTHCSSLPHYQKLKKFLNKLAEERRQKKET</sequence>